<reference key="1">
    <citation type="journal article" date="2008" name="PLoS ONE">
        <title>Genome sequence of a lancefield group C Streptococcus zooepidemicus strain causing epidemic nephritis: new information about an old disease.</title>
        <authorList>
            <person name="Beres S.B."/>
            <person name="Sesso R."/>
            <person name="Pinto S.W.L."/>
            <person name="Hoe N.P."/>
            <person name="Porcella S.F."/>
            <person name="Deleo F.R."/>
            <person name="Musser J.M."/>
        </authorList>
    </citation>
    <scope>NUCLEOTIDE SEQUENCE [LARGE SCALE GENOMIC DNA]</scope>
    <source>
        <strain>MGCS10565</strain>
    </source>
</reference>
<organism>
    <name type="scientific">Streptococcus equi subsp. zooepidemicus (strain MGCS10565)</name>
    <dbReference type="NCBI Taxonomy" id="552526"/>
    <lineage>
        <taxon>Bacteria</taxon>
        <taxon>Bacillati</taxon>
        <taxon>Bacillota</taxon>
        <taxon>Bacilli</taxon>
        <taxon>Lactobacillales</taxon>
        <taxon>Streptococcaceae</taxon>
        <taxon>Streptococcus</taxon>
    </lineage>
</organism>
<protein>
    <recommendedName>
        <fullName evidence="1">GTPase Obg</fullName>
        <ecNumber evidence="1">3.6.5.-</ecNumber>
    </recommendedName>
    <alternativeName>
        <fullName evidence="1">GTP-binding protein Obg</fullName>
    </alternativeName>
</protein>
<feature type="chain" id="PRO_0000386294" description="GTPase Obg">
    <location>
        <begin position="1"/>
        <end position="435"/>
    </location>
</feature>
<feature type="domain" description="Obg" evidence="3">
    <location>
        <begin position="1"/>
        <end position="158"/>
    </location>
</feature>
<feature type="domain" description="OBG-type G" evidence="1">
    <location>
        <begin position="159"/>
        <end position="336"/>
    </location>
</feature>
<feature type="domain" description="OCT" evidence="2">
    <location>
        <begin position="357"/>
        <end position="435"/>
    </location>
</feature>
<feature type="binding site" evidence="1">
    <location>
        <begin position="165"/>
        <end position="172"/>
    </location>
    <ligand>
        <name>GTP</name>
        <dbReference type="ChEBI" id="CHEBI:37565"/>
    </ligand>
</feature>
<feature type="binding site" evidence="1">
    <location>
        <position position="172"/>
    </location>
    <ligand>
        <name>Mg(2+)</name>
        <dbReference type="ChEBI" id="CHEBI:18420"/>
    </ligand>
</feature>
<feature type="binding site" evidence="1">
    <location>
        <begin position="190"/>
        <end position="194"/>
    </location>
    <ligand>
        <name>GTP</name>
        <dbReference type="ChEBI" id="CHEBI:37565"/>
    </ligand>
</feature>
<feature type="binding site" evidence="1">
    <location>
        <position position="192"/>
    </location>
    <ligand>
        <name>Mg(2+)</name>
        <dbReference type="ChEBI" id="CHEBI:18420"/>
    </ligand>
</feature>
<feature type="binding site" evidence="1">
    <location>
        <begin position="212"/>
        <end position="215"/>
    </location>
    <ligand>
        <name>GTP</name>
        <dbReference type="ChEBI" id="CHEBI:37565"/>
    </ligand>
</feature>
<feature type="binding site" evidence="1">
    <location>
        <begin position="282"/>
        <end position="285"/>
    </location>
    <ligand>
        <name>GTP</name>
        <dbReference type="ChEBI" id="CHEBI:37565"/>
    </ligand>
</feature>
<feature type="binding site" evidence="1">
    <location>
        <begin position="317"/>
        <end position="319"/>
    </location>
    <ligand>
        <name>GTP</name>
        <dbReference type="ChEBI" id="CHEBI:37565"/>
    </ligand>
</feature>
<proteinExistence type="inferred from homology"/>
<dbReference type="EC" id="3.6.5.-" evidence="1"/>
<dbReference type="EMBL" id="CP001129">
    <property type="protein sequence ID" value="ACG62624.1"/>
    <property type="molecule type" value="Genomic_DNA"/>
</dbReference>
<dbReference type="SMR" id="B4U3Q7"/>
<dbReference type="KEGG" id="sez:Sez_1288"/>
<dbReference type="HOGENOM" id="CLU_011747_2_1_9"/>
<dbReference type="Proteomes" id="UP000001873">
    <property type="component" value="Chromosome"/>
</dbReference>
<dbReference type="GO" id="GO:0005737">
    <property type="term" value="C:cytoplasm"/>
    <property type="evidence" value="ECO:0007669"/>
    <property type="project" value="UniProtKB-SubCell"/>
</dbReference>
<dbReference type="GO" id="GO:0005525">
    <property type="term" value="F:GTP binding"/>
    <property type="evidence" value="ECO:0007669"/>
    <property type="project" value="UniProtKB-UniRule"/>
</dbReference>
<dbReference type="GO" id="GO:0003924">
    <property type="term" value="F:GTPase activity"/>
    <property type="evidence" value="ECO:0007669"/>
    <property type="project" value="UniProtKB-UniRule"/>
</dbReference>
<dbReference type="GO" id="GO:0000287">
    <property type="term" value="F:magnesium ion binding"/>
    <property type="evidence" value="ECO:0007669"/>
    <property type="project" value="InterPro"/>
</dbReference>
<dbReference type="GO" id="GO:0042254">
    <property type="term" value="P:ribosome biogenesis"/>
    <property type="evidence" value="ECO:0007669"/>
    <property type="project" value="UniProtKB-UniRule"/>
</dbReference>
<dbReference type="CDD" id="cd01898">
    <property type="entry name" value="Obg"/>
    <property type="match status" value="1"/>
</dbReference>
<dbReference type="FunFam" id="2.70.210.12:FF:000001">
    <property type="entry name" value="GTPase Obg"/>
    <property type="match status" value="1"/>
</dbReference>
<dbReference type="FunFam" id="3.40.50.300:FF:000515">
    <property type="entry name" value="GTPase Obg"/>
    <property type="match status" value="1"/>
</dbReference>
<dbReference type="Gene3D" id="3.30.300.350">
    <property type="entry name" value="GTP-binding protein OBG, C-terminal domain"/>
    <property type="match status" value="1"/>
</dbReference>
<dbReference type="Gene3D" id="2.70.210.12">
    <property type="entry name" value="GTP1/OBG domain"/>
    <property type="match status" value="1"/>
</dbReference>
<dbReference type="Gene3D" id="3.40.50.300">
    <property type="entry name" value="P-loop containing nucleotide triphosphate hydrolases"/>
    <property type="match status" value="1"/>
</dbReference>
<dbReference type="HAMAP" id="MF_01454">
    <property type="entry name" value="GTPase_Obg"/>
    <property type="match status" value="1"/>
</dbReference>
<dbReference type="InterPro" id="IPR031167">
    <property type="entry name" value="G_OBG"/>
</dbReference>
<dbReference type="InterPro" id="IPR006073">
    <property type="entry name" value="GTP-bd"/>
</dbReference>
<dbReference type="InterPro" id="IPR014100">
    <property type="entry name" value="GTP-bd_Obg/CgtA"/>
</dbReference>
<dbReference type="InterPro" id="IPR036346">
    <property type="entry name" value="GTP-bd_prot_GTP1/OBG_C_sf"/>
</dbReference>
<dbReference type="InterPro" id="IPR006074">
    <property type="entry name" value="GTP1-OBG_CS"/>
</dbReference>
<dbReference type="InterPro" id="IPR006169">
    <property type="entry name" value="GTP1_OBG_dom"/>
</dbReference>
<dbReference type="InterPro" id="IPR036726">
    <property type="entry name" value="GTP1_OBG_dom_sf"/>
</dbReference>
<dbReference type="InterPro" id="IPR045086">
    <property type="entry name" value="OBG_GTPase"/>
</dbReference>
<dbReference type="InterPro" id="IPR015349">
    <property type="entry name" value="OCT_dom"/>
</dbReference>
<dbReference type="InterPro" id="IPR027417">
    <property type="entry name" value="P-loop_NTPase"/>
</dbReference>
<dbReference type="InterPro" id="IPR005225">
    <property type="entry name" value="Small_GTP-bd"/>
</dbReference>
<dbReference type="NCBIfam" id="TIGR02729">
    <property type="entry name" value="Obg_CgtA"/>
    <property type="match status" value="1"/>
</dbReference>
<dbReference type="NCBIfam" id="TIGR03595">
    <property type="entry name" value="Obg_CgtA_exten"/>
    <property type="match status" value="1"/>
</dbReference>
<dbReference type="NCBIfam" id="NF008954">
    <property type="entry name" value="PRK12296.1"/>
    <property type="match status" value="1"/>
</dbReference>
<dbReference type="NCBIfam" id="NF008955">
    <property type="entry name" value="PRK12297.1"/>
    <property type="match status" value="1"/>
</dbReference>
<dbReference type="NCBIfam" id="NF008956">
    <property type="entry name" value="PRK12299.1"/>
    <property type="match status" value="1"/>
</dbReference>
<dbReference type="NCBIfam" id="TIGR00231">
    <property type="entry name" value="small_GTP"/>
    <property type="match status" value="1"/>
</dbReference>
<dbReference type="PANTHER" id="PTHR11702">
    <property type="entry name" value="DEVELOPMENTALLY REGULATED GTP-BINDING PROTEIN-RELATED"/>
    <property type="match status" value="1"/>
</dbReference>
<dbReference type="PANTHER" id="PTHR11702:SF31">
    <property type="entry name" value="MITOCHONDRIAL RIBOSOME-ASSOCIATED GTPASE 2"/>
    <property type="match status" value="1"/>
</dbReference>
<dbReference type="Pfam" id="PF09269">
    <property type="entry name" value="DUF1967"/>
    <property type="match status" value="1"/>
</dbReference>
<dbReference type="Pfam" id="PF01018">
    <property type="entry name" value="GTP1_OBG"/>
    <property type="match status" value="1"/>
</dbReference>
<dbReference type="Pfam" id="PF01926">
    <property type="entry name" value="MMR_HSR1"/>
    <property type="match status" value="1"/>
</dbReference>
<dbReference type="PIRSF" id="PIRSF002401">
    <property type="entry name" value="GTP_bd_Obg/CgtA"/>
    <property type="match status" value="1"/>
</dbReference>
<dbReference type="PRINTS" id="PR00326">
    <property type="entry name" value="GTP1OBG"/>
</dbReference>
<dbReference type="SUPFAM" id="SSF102741">
    <property type="entry name" value="Obg GTP-binding protein C-terminal domain"/>
    <property type="match status" value="1"/>
</dbReference>
<dbReference type="SUPFAM" id="SSF82051">
    <property type="entry name" value="Obg GTP-binding protein N-terminal domain"/>
    <property type="match status" value="1"/>
</dbReference>
<dbReference type="SUPFAM" id="SSF52540">
    <property type="entry name" value="P-loop containing nucleoside triphosphate hydrolases"/>
    <property type="match status" value="1"/>
</dbReference>
<dbReference type="PROSITE" id="PS51710">
    <property type="entry name" value="G_OBG"/>
    <property type="match status" value="1"/>
</dbReference>
<dbReference type="PROSITE" id="PS00905">
    <property type="entry name" value="GTP1_OBG"/>
    <property type="match status" value="1"/>
</dbReference>
<dbReference type="PROSITE" id="PS51883">
    <property type="entry name" value="OBG"/>
    <property type="match status" value="1"/>
</dbReference>
<dbReference type="PROSITE" id="PS51881">
    <property type="entry name" value="OCT"/>
    <property type="match status" value="1"/>
</dbReference>
<evidence type="ECO:0000255" key="1">
    <source>
        <dbReference type="HAMAP-Rule" id="MF_01454"/>
    </source>
</evidence>
<evidence type="ECO:0000255" key="2">
    <source>
        <dbReference type="PROSITE-ProRule" id="PRU01229"/>
    </source>
</evidence>
<evidence type="ECO:0000255" key="3">
    <source>
        <dbReference type="PROSITE-ProRule" id="PRU01231"/>
    </source>
</evidence>
<gene>
    <name evidence="1" type="primary">obg</name>
    <name type="ordered locus">Sez_1288</name>
</gene>
<name>OBG_STREM</name>
<comment type="function">
    <text evidence="1">An essential GTPase which binds GTP, GDP and possibly (p)ppGpp with moderate affinity, with high nucleotide exchange rates and a fairly low GTP hydrolysis rate. Plays a role in control of the cell cycle, stress response, ribosome biogenesis and in those bacteria that undergo differentiation, in morphogenesis control.</text>
</comment>
<comment type="cofactor">
    <cofactor evidence="1">
        <name>Mg(2+)</name>
        <dbReference type="ChEBI" id="CHEBI:18420"/>
    </cofactor>
</comment>
<comment type="subunit">
    <text evidence="1">Monomer.</text>
</comment>
<comment type="subcellular location">
    <subcellularLocation>
        <location evidence="1">Cytoplasm</location>
    </subcellularLocation>
</comment>
<comment type="similarity">
    <text evidence="1">Belongs to the TRAFAC class OBG-HflX-like GTPase superfamily. OBG GTPase family.</text>
</comment>
<sequence length="435" mass="47945">MFLDTAKVSVQAGRGGDGMVAFRREKYVPNGGPWGGDGGKGGSVIFKVDEGLRTLMDFRYNRKFKAKSGEKGMTKGMHGRGSEDLIISVPQGTTVRDAETGKVLTDLVEHGQEFVVAKGGRGGRGNIRFATPRNPAPEIAENGEPGEERQLELELKILADVGLVGFPSVGKSTLLSVVSSAKPKIGAYHFTTIVPNLGMVRTKSGESFAMADLPGLIEGASQGVGLGTQFLRHIERTRVILHVIDMSAAEGRDPYEDYVAINKELEAYNLRLMERPQIIVANKMDMPEAKEQLQRFKEQLAAQYDDFEELPMIFPISSLAHQGLDSLLEATAELLAKTDDFLLYDEADFAEDEAYYGFAAEEKAFEISRADDAAWVLSGEKLERLFVMTNLERDESIMKFARQLRGMGVDEALRERGAKDGDIVRIGKFEFEFVD</sequence>
<accession>B4U3Q7</accession>
<keyword id="KW-0963">Cytoplasm</keyword>
<keyword id="KW-0342">GTP-binding</keyword>
<keyword id="KW-0378">Hydrolase</keyword>
<keyword id="KW-0460">Magnesium</keyword>
<keyword id="KW-0479">Metal-binding</keyword>
<keyword id="KW-0547">Nucleotide-binding</keyword>